<keyword id="KW-0223">Dioxygenase</keyword>
<keyword id="KW-0408">Iron</keyword>
<keyword id="KW-0479">Metal-binding</keyword>
<keyword id="KW-0560">Oxidoreductase</keyword>
<keyword id="KW-1185">Reference proteome</keyword>
<keyword id="KW-0847">Vitamin C</keyword>
<evidence type="ECO:0000255" key="1">
    <source>
        <dbReference type="HAMAP-Rule" id="MF_00657"/>
    </source>
</evidence>
<evidence type="ECO:0000305" key="2"/>
<comment type="cofactor">
    <cofactor evidence="1">
        <name>Fe(2+)</name>
        <dbReference type="ChEBI" id="CHEBI:29033"/>
    </cofactor>
    <text evidence="1">Binds 1 Fe(2+) ion per subunit.</text>
</comment>
<comment type="cofactor">
    <cofactor evidence="1">
        <name>L-ascorbate</name>
        <dbReference type="ChEBI" id="CHEBI:38290"/>
    </cofactor>
</comment>
<comment type="sequence caution" evidence="2">
    <conflict type="erroneous initiation">
        <sequence resource="EMBL-CDS" id="ABJ00184"/>
    </conflict>
</comment>
<name>YBIX_ECOK1</name>
<gene>
    <name evidence="1" type="primary">ybiX</name>
    <name type="ordered locus">Ecok1_06900</name>
    <name type="ORF">APECO1_1287</name>
</gene>
<organism>
    <name type="scientific">Escherichia coli O1:K1 / APEC</name>
    <dbReference type="NCBI Taxonomy" id="405955"/>
    <lineage>
        <taxon>Bacteria</taxon>
        <taxon>Pseudomonadati</taxon>
        <taxon>Pseudomonadota</taxon>
        <taxon>Gammaproteobacteria</taxon>
        <taxon>Enterobacterales</taxon>
        <taxon>Enterobacteriaceae</taxon>
        <taxon>Escherichia</taxon>
    </lineage>
</organism>
<proteinExistence type="inferred from homology"/>
<sequence>MMYHIPGVLSPQDVARFREQLEQAEWVDGRVTTGAQGAQVKNNQQVDTRSALYAALQNEVLNAVNQHALFFAAALPRTLSTPLFNRYQNNETYGFHVDGAVRSHPQNGWMRTDLSATLFLSDPESYDGGELVVNDTFGQHRVKLPAGDLVLYPSSSLHCVTPVTRGVRVASFMWIQSMIRDDKKRAMLFELDNNIQSLKSRYGESEEILSLLNLYHNLLREWSEI</sequence>
<feature type="chain" id="PRO_0000346482" description="PKHD-type hydroxylase YbiX">
    <location>
        <begin position="1"/>
        <end position="225"/>
    </location>
</feature>
<feature type="domain" description="Fe2OG dioxygenase" evidence="1">
    <location>
        <begin position="78"/>
        <end position="177"/>
    </location>
</feature>
<feature type="binding site" evidence="1">
    <location>
        <position position="96"/>
    </location>
    <ligand>
        <name>Fe cation</name>
        <dbReference type="ChEBI" id="CHEBI:24875"/>
    </ligand>
</feature>
<feature type="binding site" evidence="1">
    <location>
        <position position="98"/>
    </location>
    <ligand>
        <name>Fe cation</name>
        <dbReference type="ChEBI" id="CHEBI:24875"/>
    </ligand>
</feature>
<feature type="binding site" evidence="1">
    <location>
        <position position="158"/>
    </location>
    <ligand>
        <name>Fe cation</name>
        <dbReference type="ChEBI" id="CHEBI:24875"/>
    </ligand>
</feature>
<feature type="binding site" evidence="1">
    <location>
        <position position="168"/>
    </location>
    <ligand>
        <name>2-oxoglutarate</name>
        <dbReference type="ChEBI" id="CHEBI:16810"/>
    </ligand>
</feature>
<accession>A1A944</accession>
<protein>
    <recommendedName>
        <fullName evidence="1">PKHD-type hydroxylase YbiX</fullName>
        <ecNumber evidence="1">1.14.11.-</ecNumber>
    </recommendedName>
</protein>
<dbReference type="EC" id="1.14.11.-" evidence="1"/>
<dbReference type="EMBL" id="CP000468">
    <property type="protein sequence ID" value="ABJ00184.1"/>
    <property type="status" value="ALT_INIT"/>
    <property type="molecule type" value="Genomic_DNA"/>
</dbReference>
<dbReference type="RefSeq" id="WP_000990167.1">
    <property type="nucleotide sequence ID" value="NZ_CADILS010000026.1"/>
</dbReference>
<dbReference type="SMR" id="A1A944"/>
<dbReference type="KEGG" id="ecv:APECO1_1287"/>
<dbReference type="HOGENOM" id="CLU_106663_0_0_6"/>
<dbReference type="Proteomes" id="UP000008216">
    <property type="component" value="Chromosome"/>
</dbReference>
<dbReference type="GO" id="GO:0016706">
    <property type="term" value="F:2-oxoglutarate-dependent dioxygenase activity"/>
    <property type="evidence" value="ECO:0007669"/>
    <property type="project" value="UniProtKB-UniRule"/>
</dbReference>
<dbReference type="GO" id="GO:0005506">
    <property type="term" value="F:iron ion binding"/>
    <property type="evidence" value="ECO:0007669"/>
    <property type="project" value="UniProtKB-UniRule"/>
</dbReference>
<dbReference type="GO" id="GO:0031418">
    <property type="term" value="F:L-ascorbic acid binding"/>
    <property type="evidence" value="ECO:0007669"/>
    <property type="project" value="UniProtKB-KW"/>
</dbReference>
<dbReference type="GO" id="GO:0006974">
    <property type="term" value="P:DNA damage response"/>
    <property type="evidence" value="ECO:0007669"/>
    <property type="project" value="TreeGrafter"/>
</dbReference>
<dbReference type="GO" id="GO:0006879">
    <property type="term" value="P:intracellular iron ion homeostasis"/>
    <property type="evidence" value="ECO:0007669"/>
    <property type="project" value="TreeGrafter"/>
</dbReference>
<dbReference type="FunFam" id="2.60.120.620:FF:000006">
    <property type="entry name" value="PKHD-type hydroxylase YbiX"/>
    <property type="match status" value="1"/>
</dbReference>
<dbReference type="FunFam" id="4.10.860.20:FF:000001">
    <property type="entry name" value="PKHD-type hydroxylase YbiX"/>
    <property type="match status" value="1"/>
</dbReference>
<dbReference type="Gene3D" id="2.60.120.620">
    <property type="entry name" value="q2cbj1_9rhob like domain"/>
    <property type="match status" value="1"/>
</dbReference>
<dbReference type="Gene3D" id="4.10.860.20">
    <property type="entry name" value="Rabenosyn, Rab binding domain"/>
    <property type="match status" value="1"/>
</dbReference>
<dbReference type="HAMAP" id="MF_00657">
    <property type="entry name" value="Hydroxyl_YbiX"/>
    <property type="match status" value="1"/>
</dbReference>
<dbReference type="InterPro" id="IPR005123">
    <property type="entry name" value="Oxoglu/Fe-dep_dioxygenase_dom"/>
</dbReference>
<dbReference type="InterPro" id="IPR041097">
    <property type="entry name" value="PKHD_C"/>
</dbReference>
<dbReference type="InterPro" id="IPR023550">
    <property type="entry name" value="PKHD_hydroxylase"/>
</dbReference>
<dbReference type="InterPro" id="IPR006620">
    <property type="entry name" value="Pro_4_hyd_alph"/>
</dbReference>
<dbReference type="InterPro" id="IPR044862">
    <property type="entry name" value="Pro_4_hyd_alph_FE2OG_OXY"/>
</dbReference>
<dbReference type="NCBIfam" id="NF003972">
    <property type="entry name" value="PRK05467.1-1"/>
    <property type="match status" value="1"/>
</dbReference>
<dbReference type="NCBIfam" id="NF003974">
    <property type="entry name" value="PRK05467.1-3"/>
    <property type="match status" value="1"/>
</dbReference>
<dbReference type="NCBIfam" id="NF003975">
    <property type="entry name" value="PRK05467.1-4"/>
    <property type="match status" value="1"/>
</dbReference>
<dbReference type="PANTHER" id="PTHR41536">
    <property type="entry name" value="PKHD-TYPE HYDROXYLASE YBIX"/>
    <property type="match status" value="1"/>
</dbReference>
<dbReference type="PANTHER" id="PTHR41536:SF1">
    <property type="entry name" value="PKHD-TYPE HYDROXYLASE YBIX"/>
    <property type="match status" value="1"/>
</dbReference>
<dbReference type="Pfam" id="PF13640">
    <property type="entry name" value="2OG-FeII_Oxy_3"/>
    <property type="match status" value="1"/>
</dbReference>
<dbReference type="Pfam" id="PF18331">
    <property type="entry name" value="PKHD_C"/>
    <property type="match status" value="1"/>
</dbReference>
<dbReference type="SMART" id="SM00702">
    <property type="entry name" value="P4Hc"/>
    <property type="match status" value="1"/>
</dbReference>
<dbReference type="SUPFAM" id="SSF51197">
    <property type="entry name" value="Clavaminate synthase-like"/>
    <property type="match status" value="1"/>
</dbReference>
<dbReference type="PROSITE" id="PS51471">
    <property type="entry name" value="FE2OG_OXY"/>
    <property type="match status" value="1"/>
</dbReference>
<reference key="1">
    <citation type="journal article" date="2007" name="J. Bacteriol.">
        <title>The genome sequence of avian pathogenic Escherichia coli strain O1:K1:H7 shares strong similarities with human extraintestinal pathogenic E. coli genomes.</title>
        <authorList>
            <person name="Johnson T.J."/>
            <person name="Kariyawasam S."/>
            <person name="Wannemuehler Y."/>
            <person name="Mangiamele P."/>
            <person name="Johnson S.J."/>
            <person name="Doetkott C."/>
            <person name="Skyberg J.A."/>
            <person name="Lynne A.M."/>
            <person name="Johnson J.R."/>
            <person name="Nolan L.K."/>
        </authorList>
    </citation>
    <scope>NUCLEOTIDE SEQUENCE [LARGE SCALE GENOMIC DNA]</scope>
</reference>